<dbReference type="EMBL" id="CP000114">
    <property type="protein sequence ID" value="ABA45035.1"/>
    <property type="molecule type" value="Genomic_DNA"/>
</dbReference>
<dbReference type="RefSeq" id="WP_000204940.1">
    <property type="nucleotide sequence ID" value="NC_007432.1"/>
</dbReference>
<dbReference type="SMR" id="Q3JZJ6"/>
<dbReference type="GeneID" id="66886539"/>
<dbReference type="KEGG" id="sak:SAK_1705"/>
<dbReference type="HOGENOM" id="CLU_087843_3_2_9"/>
<dbReference type="GO" id="GO:0005829">
    <property type="term" value="C:cytosol"/>
    <property type="evidence" value="ECO:0007669"/>
    <property type="project" value="TreeGrafter"/>
</dbReference>
<dbReference type="GO" id="GO:0003723">
    <property type="term" value="F:RNA binding"/>
    <property type="evidence" value="ECO:0007669"/>
    <property type="project" value="UniProtKB-UniRule"/>
</dbReference>
<dbReference type="GO" id="GO:0006353">
    <property type="term" value="P:DNA-templated transcription termination"/>
    <property type="evidence" value="ECO:0007669"/>
    <property type="project" value="UniProtKB-UniRule"/>
</dbReference>
<dbReference type="GO" id="GO:0031564">
    <property type="term" value="P:transcription antitermination"/>
    <property type="evidence" value="ECO:0007669"/>
    <property type="project" value="UniProtKB-KW"/>
</dbReference>
<dbReference type="Gene3D" id="1.10.940.10">
    <property type="entry name" value="NusB-like"/>
    <property type="match status" value="1"/>
</dbReference>
<dbReference type="HAMAP" id="MF_00073">
    <property type="entry name" value="NusB"/>
    <property type="match status" value="1"/>
</dbReference>
<dbReference type="InterPro" id="IPR035926">
    <property type="entry name" value="NusB-like_sf"/>
</dbReference>
<dbReference type="InterPro" id="IPR011605">
    <property type="entry name" value="NusB_fam"/>
</dbReference>
<dbReference type="InterPro" id="IPR006027">
    <property type="entry name" value="NusB_RsmB_TIM44"/>
</dbReference>
<dbReference type="NCBIfam" id="TIGR01951">
    <property type="entry name" value="nusB"/>
    <property type="match status" value="1"/>
</dbReference>
<dbReference type="NCBIfam" id="NF001223">
    <property type="entry name" value="PRK00202.1-1"/>
    <property type="match status" value="1"/>
</dbReference>
<dbReference type="PANTHER" id="PTHR11078:SF3">
    <property type="entry name" value="ANTITERMINATION NUSB DOMAIN-CONTAINING PROTEIN"/>
    <property type="match status" value="1"/>
</dbReference>
<dbReference type="PANTHER" id="PTHR11078">
    <property type="entry name" value="N UTILIZATION SUBSTANCE PROTEIN B-RELATED"/>
    <property type="match status" value="1"/>
</dbReference>
<dbReference type="Pfam" id="PF01029">
    <property type="entry name" value="NusB"/>
    <property type="match status" value="1"/>
</dbReference>
<dbReference type="SUPFAM" id="SSF48013">
    <property type="entry name" value="NusB-like"/>
    <property type="match status" value="1"/>
</dbReference>
<evidence type="ECO:0000255" key="1">
    <source>
        <dbReference type="HAMAP-Rule" id="MF_00073"/>
    </source>
</evidence>
<keyword id="KW-0694">RNA-binding</keyword>
<keyword id="KW-0804">Transcription</keyword>
<keyword id="KW-0889">Transcription antitermination</keyword>
<keyword id="KW-0805">Transcription regulation</keyword>
<organism>
    <name type="scientific">Streptococcus agalactiae serotype Ia (strain ATCC 27591 / A909 / CDC SS700)</name>
    <dbReference type="NCBI Taxonomy" id="205921"/>
    <lineage>
        <taxon>Bacteria</taxon>
        <taxon>Bacillati</taxon>
        <taxon>Bacillota</taxon>
        <taxon>Bacilli</taxon>
        <taxon>Lactobacillales</taxon>
        <taxon>Streptococcaceae</taxon>
        <taxon>Streptococcus</taxon>
    </lineage>
</organism>
<proteinExistence type="inferred from homology"/>
<reference key="1">
    <citation type="journal article" date="2005" name="Proc. Natl. Acad. Sci. U.S.A.">
        <title>Genome analysis of multiple pathogenic isolates of Streptococcus agalactiae: implications for the microbial 'pan-genome'.</title>
        <authorList>
            <person name="Tettelin H."/>
            <person name="Masignani V."/>
            <person name="Cieslewicz M.J."/>
            <person name="Donati C."/>
            <person name="Medini D."/>
            <person name="Ward N.L."/>
            <person name="Angiuoli S.V."/>
            <person name="Crabtree J."/>
            <person name="Jones A.L."/>
            <person name="Durkin A.S."/>
            <person name="DeBoy R.T."/>
            <person name="Davidsen T.M."/>
            <person name="Mora M."/>
            <person name="Scarselli M."/>
            <person name="Margarit y Ros I."/>
            <person name="Peterson J.D."/>
            <person name="Hauser C.R."/>
            <person name="Sundaram J.P."/>
            <person name="Nelson W.C."/>
            <person name="Madupu R."/>
            <person name="Brinkac L.M."/>
            <person name="Dodson R.J."/>
            <person name="Rosovitz M.J."/>
            <person name="Sullivan S.A."/>
            <person name="Daugherty S.C."/>
            <person name="Haft D.H."/>
            <person name="Selengut J."/>
            <person name="Gwinn M.L."/>
            <person name="Zhou L."/>
            <person name="Zafar N."/>
            <person name="Khouri H."/>
            <person name="Radune D."/>
            <person name="Dimitrov G."/>
            <person name="Watkins K."/>
            <person name="O'Connor K.J."/>
            <person name="Smith S."/>
            <person name="Utterback T.R."/>
            <person name="White O."/>
            <person name="Rubens C.E."/>
            <person name="Grandi G."/>
            <person name="Madoff L.C."/>
            <person name="Kasper D.L."/>
            <person name="Telford J.L."/>
            <person name="Wessels M.R."/>
            <person name="Rappuoli R."/>
            <person name="Fraser C.M."/>
        </authorList>
    </citation>
    <scope>NUCLEOTIDE SEQUENCE [LARGE SCALE GENOMIC DNA]</scope>
    <source>
        <strain>ATCC 27591 / A909 / CDC SS700</strain>
    </source>
</reference>
<gene>
    <name evidence="1" type="primary">nusB</name>
    <name type="ordered locus">SAK_1705</name>
</gene>
<name>NUSB_STRA1</name>
<sequence>MTSVFKDSRRDLRERAFQTLFSLETGGEFIDAAHFAYGYDKTVSEDKVLEVPIFLLNLVNGVVDHKDELDTLISSHLKSGWSLERLTLVDKSLLRLGLYEIKYFDETPDRVALNEIIEIAKKYSDETSAKFVNGLLSQFITNEN</sequence>
<feature type="chain" id="PRO_0000265602" description="Transcription antitermination protein NusB">
    <location>
        <begin position="1"/>
        <end position="144"/>
    </location>
</feature>
<accession>Q3JZJ6</accession>
<comment type="function">
    <text evidence="1">Involved in transcription antitermination. Required for transcription of ribosomal RNA (rRNA) genes. Binds specifically to the boxA antiterminator sequence of the ribosomal RNA (rrn) operons.</text>
</comment>
<comment type="similarity">
    <text evidence="1">Belongs to the NusB family.</text>
</comment>
<protein>
    <recommendedName>
        <fullName evidence="1">Transcription antitermination protein NusB</fullName>
    </recommendedName>
    <alternativeName>
        <fullName evidence="1">Antitermination factor NusB</fullName>
    </alternativeName>
</protein>